<name>NUDL_SHISS</name>
<sequence>MEYRSLMLDDFLSRFQLLRPQINRETLNHRQAAVLIPIVRRPQPGLLLTQRSIHLRKHAGQVAFPGGAVDDTDASVIAAALREAEEEVAIPPSAVEVIGVLPPVDSVTGYQVTPVVGIIPPDLPYRASEDEVSAVFEMPLAQALHLGRYHPLDIYRRGDSHRVWLSWYEQYFVWGMTAGIIRELALQIGVKP</sequence>
<evidence type="ECO:0000255" key="1">
    <source>
        <dbReference type="HAMAP-Rule" id="MF_01592"/>
    </source>
</evidence>
<reference key="1">
    <citation type="journal article" date="2005" name="Nucleic Acids Res.">
        <title>Genome dynamics and diversity of Shigella species, the etiologic agents of bacillary dysentery.</title>
        <authorList>
            <person name="Yang F."/>
            <person name="Yang J."/>
            <person name="Zhang X."/>
            <person name="Chen L."/>
            <person name="Jiang Y."/>
            <person name="Yan Y."/>
            <person name="Tang X."/>
            <person name="Wang J."/>
            <person name="Xiong Z."/>
            <person name="Dong J."/>
            <person name="Xue Y."/>
            <person name="Zhu Y."/>
            <person name="Xu X."/>
            <person name="Sun L."/>
            <person name="Chen S."/>
            <person name="Nie H."/>
            <person name="Peng J."/>
            <person name="Xu J."/>
            <person name="Wang Y."/>
            <person name="Yuan Z."/>
            <person name="Wen Y."/>
            <person name="Yao Z."/>
            <person name="Shen Y."/>
            <person name="Qiang B."/>
            <person name="Hou Y."/>
            <person name="Yu J."/>
            <person name="Jin Q."/>
        </authorList>
    </citation>
    <scope>NUCLEOTIDE SEQUENCE [LARGE SCALE GENOMIC DNA]</scope>
    <source>
        <strain>Ss046</strain>
    </source>
</reference>
<organism>
    <name type="scientific">Shigella sonnei (strain Ss046)</name>
    <dbReference type="NCBI Taxonomy" id="300269"/>
    <lineage>
        <taxon>Bacteria</taxon>
        <taxon>Pseudomonadati</taxon>
        <taxon>Pseudomonadota</taxon>
        <taxon>Gammaproteobacteria</taxon>
        <taxon>Enterobacterales</taxon>
        <taxon>Enterobacteriaceae</taxon>
        <taxon>Shigella</taxon>
    </lineage>
</organism>
<gene>
    <name evidence="1" type="primary">nudL</name>
    <name type="ordered locus">SSON_1347</name>
</gene>
<dbReference type="EC" id="3.6.1.-" evidence="1"/>
<dbReference type="EMBL" id="CP000038">
    <property type="protein sequence ID" value="AAZ88058.1"/>
    <property type="molecule type" value="Genomic_DNA"/>
</dbReference>
<dbReference type="RefSeq" id="WP_000456706.1">
    <property type="nucleotide sequence ID" value="NC_007384.1"/>
</dbReference>
<dbReference type="SMR" id="Q3Z2F4"/>
<dbReference type="KEGG" id="ssn:SSON_1347"/>
<dbReference type="HOGENOM" id="CLU_040940_5_2_6"/>
<dbReference type="Proteomes" id="UP000002529">
    <property type="component" value="Chromosome"/>
</dbReference>
<dbReference type="GO" id="GO:0010945">
    <property type="term" value="F:coenzyme A diphosphatase activity"/>
    <property type="evidence" value="ECO:0007669"/>
    <property type="project" value="InterPro"/>
</dbReference>
<dbReference type="GO" id="GO:0000287">
    <property type="term" value="F:magnesium ion binding"/>
    <property type="evidence" value="ECO:0007669"/>
    <property type="project" value="UniProtKB-UniRule"/>
</dbReference>
<dbReference type="GO" id="GO:0030145">
    <property type="term" value="F:manganese ion binding"/>
    <property type="evidence" value="ECO:0007669"/>
    <property type="project" value="UniProtKB-UniRule"/>
</dbReference>
<dbReference type="GO" id="GO:0009132">
    <property type="term" value="P:nucleoside diphosphate metabolic process"/>
    <property type="evidence" value="ECO:0007669"/>
    <property type="project" value="InterPro"/>
</dbReference>
<dbReference type="CDD" id="cd03426">
    <property type="entry name" value="NUDIX_CoAse_Nudt7"/>
    <property type="match status" value="1"/>
</dbReference>
<dbReference type="FunFam" id="3.90.79.10:FF:000013">
    <property type="entry name" value="Uncharacterized Nudix hydrolase NudL"/>
    <property type="match status" value="1"/>
</dbReference>
<dbReference type="Gene3D" id="3.90.79.10">
    <property type="entry name" value="Nucleoside Triphosphate Pyrophosphohydrolase"/>
    <property type="match status" value="1"/>
</dbReference>
<dbReference type="HAMAP" id="MF_01592">
    <property type="entry name" value="Nudix_NudL"/>
    <property type="match status" value="1"/>
</dbReference>
<dbReference type="InterPro" id="IPR045121">
    <property type="entry name" value="CoAse"/>
</dbReference>
<dbReference type="InterPro" id="IPR015797">
    <property type="entry name" value="NUDIX_hydrolase-like_dom_sf"/>
</dbReference>
<dbReference type="InterPro" id="IPR000086">
    <property type="entry name" value="NUDIX_hydrolase_dom"/>
</dbReference>
<dbReference type="InterPro" id="IPR000059">
    <property type="entry name" value="NUDIX_hydrolase_NudL_CS"/>
</dbReference>
<dbReference type="InterPro" id="IPR023735">
    <property type="entry name" value="Nudix_NudL"/>
</dbReference>
<dbReference type="NCBIfam" id="NF007980">
    <property type="entry name" value="PRK10707.1"/>
    <property type="match status" value="1"/>
</dbReference>
<dbReference type="PANTHER" id="PTHR12992:SF11">
    <property type="entry name" value="MITOCHONDRIAL COENZYME A DIPHOSPHATASE NUDT8"/>
    <property type="match status" value="1"/>
</dbReference>
<dbReference type="PANTHER" id="PTHR12992">
    <property type="entry name" value="NUDIX HYDROLASE"/>
    <property type="match status" value="1"/>
</dbReference>
<dbReference type="Pfam" id="PF00293">
    <property type="entry name" value="NUDIX"/>
    <property type="match status" value="1"/>
</dbReference>
<dbReference type="SUPFAM" id="SSF55811">
    <property type="entry name" value="Nudix"/>
    <property type="match status" value="1"/>
</dbReference>
<dbReference type="PROSITE" id="PS51462">
    <property type="entry name" value="NUDIX"/>
    <property type="match status" value="1"/>
</dbReference>
<dbReference type="PROSITE" id="PS01293">
    <property type="entry name" value="NUDIX_COA"/>
    <property type="match status" value="1"/>
</dbReference>
<protein>
    <recommendedName>
        <fullName evidence="1">Uncharacterized Nudix hydrolase NudL</fullName>
        <ecNumber evidence="1">3.6.1.-</ecNumber>
    </recommendedName>
</protein>
<comment type="function">
    <text evidence="1">Probably mediates the hydrolysis of some nucleoside diphosphate derivatives.</text>
</comment>
<comment type="cofactor">
    <cofactor evidence="1">
        <name>Mn(2+)</name>
        <dbReference type="ChEBI" id="CHEBI:29035"/>
    </cofactor>
    <cofactor evidence="1">
        <name>Mg(2+)</name>
        <dbReference type="ChEBI" id="CHEBI:18420"/>
    </cofactor>
</comment>
<comment type="similarity">
    <text evidence="1">Belongs to the Nudix hydrolase family. PCD1 subfamily.</text>
</comment>
<accession>Q3Z2F4</accession>
<feature type="chain" id="PRO_0000315587" description="Uncharacterized Nudix hydrolase NudL">
    <location>
        <begin position="1"/>
        <end position="192"/>
    </location>
</feature>
<feature type="domain" description="Nudix hydrolase" evidence="1">
    <location>
        <begin position="29"/>
        <end position="160"/>
    </location>
</feature>
<feature type="short sequence motif" description="Nudix box">
    <location>
        <begin position="67"/>
        <end position="89"/>
    </location>
</feature>
<feature type="binding site" evidence="1">
    <location>
        <position position="83"/>
    </location>
    <ligand>
        <name>Mg(2+)</name>
        <dbReference type="ChEBI" id="CHEBI:18420"/>
    </ligand>
</feature>
<feature type="binding site" evidence="1">
    <location>
        <position position="87"/>
    </location>
    <ligand>
        <name>Mg(2+)</name>
        <dbReference type="ChEBI" id="CHEBI:18420"/>
    </ligand>
</feature>
<keyword id="KW-0378">Hydrolase</keyword>
<keyword id="KW-0460">Magnesium</keyword>
<keyword id="KW-0464">Manganese</keyword>
<keyword id="KW-0479">Metal-binding</keyword>
<keyword id="KW-1185">Reference proteome</keyword>
<proteinExistence type="inferred from homology"/>